<accession>B7M4C3</accession>
<reference key="1">
    <citation type="journal article" date="2009" name="PLoS Genet.">
        <title>Organised genome dynamics in the Escherichia coli species results in highly diverse adaptive paths.</title>
        <authorList>
            <person name="Touchon M."/>
            <person name="Hoede C."/>
            <person name="Tenaillon O."/>
            <person name="Barbe V."/>
            <person name="Baeriswyl S."/>
            <person name="Bidet P."/>
            <person name="Bingen E."/>
            <person name="Bonacorsi S."/>
            <person name="Bouchier C."/>
            <person name="Bouvet O."/>
            <person name="Calteau A."/>
            <person name="Chiapello H."/>
            <person name="Clermont O."/>
            <person name="Cruveiller S."/>
            <person name="Danchin A."/>
            <person name="Diard M."/>
            <person name="Dossat C."/>
            <person name="Karoui M.E."/>
            <person name="Frapy E."/>
            <person name="Garry L."/>
            <person name="Ghigo J.M."/>
            <person name="Gilles A.M."/>
            <person name="Johnson J."/>
            <person name="Le Bouguenec C."/>
            <person name="Lescat M."/>
            <person name="Mangenot S."/>
            <person name="Martinez-Jehanne V."/>
            <person name="Matic I."/>
            <person name="Nassif X."/>
            <person name="Oztas S."/>
            <person name="Petit M.A."/>
            <person name="Pichon C."/>
            <person name="Rouy Z."/>
            <person name="Ruf C.S."/>
            <person name="Schneider D."/>
            <person name="Tourret J."/>
            <person name="Vacherie B."/>
            <person name="Vallenet D."/>
            <person name="Medigue C."/>
            <person name="Rocha E.P.C."/>
            <person name="Denamur E."/>
        </authorList>
    </citation>
    <scope>NUCLEOTIDE SEQUENCE [LARGE SCALE GENOMIC DNA]</scope>
    <source>
        <strain>IAI1</strain>
    </source>
</reference>
<dbReference type="EMBL" id="CU928160">
    <property type="protein sequence ID" value="CAR00606.1"/>
    <property type="molecule type" value="Genomic_DNA"/>
</dbReference>
<dbReference type="SMR" id="B7M4C3"/>
<dbReference type="KEGG" id="ecr:ECIAI1_3809"/>
<dbReference type="HOGENOM" id="CLU_073529_0_1_6"/>
<dbReference type="GO" id="GO:0046872">
    <property type="term" value="F:metal ion binding"/>
    <property type="evidence" value="ECO:0007669"/>
    <property type="project" value="UniProtKB-KW"/>
</dbReference>
<dbReference type="GO" id="GO:0008237">
    <property type="term" value="F:metallopeptidase activity"/>
    <property type="evidence" value="ECO:0007669"/>
    <property type="project" value="UniProtKB-KW"/>
</dbReference>
<dbReference type="GO" id="GO:0006508">
    <property type="term" value="P:proteolysis"/>
    <property type="evidence" value="ECO:0007669"/>
    <property type="project" value="UniProtKB-KW"/>
</dbReference>
<dbReference type="CDD" id="cd08071">
    <property type="entry name" value="MPN_DUF2466"/>
    <property type="match status" value="1"/>
</dbReference>
<dbReference type="Gene3D" id="3.40.140.10">
    <property type="entry name" value="Cytidine Deaminase, domain 2"/>
    <property type="match status" value="1"/>
</dbReference>
<dbReference type="HAMAP" id="MF_00018">
    <property type="entry name" value="UPF0758_YicR"/>
    <property type="match status" value="1"/>
</dbReference>
<dbReference type="InterPro" id="IPR037518">
    <property type="entry name" value="MPN"/>
</dbReference>
<dbReference type="InterPro" id="IPR025657">
    <property type="entry name" value="RadC_JAB"/>
</dbReference>
<dbReference type="InterPro" id="IPR010994">
    <property type="entry name" value="RuvA_2-like"/>
</dbReference>
<dbReference type="InterPro" id="IPR001405">
    <property type="entry name" value="UPF0758"/>
</dbReference>
<dbReference type="InterPro" id="IPR020891">
    <property type="entry name" value="UPF0758_CS"/>
</dbReference>
<dbReference type="InterPro" id="IPR046778">
    <property type="entry name" value="UPF0758_N"/>
</dbReference>
<dbReference type="InterPro" id="IPR022820">
    <property type="entry name" value="UPF0758_YicR"/>
</dbReference>
<dbReference type="NCBIfam" id="NF000642">
    <property type="entry name" value="PRK00024.1"/>
    <property type="match status" value="1"/>
</dbReference>
<dbReference type="NCBIfam" id="TIGR00608">
    <property type="entry name" value="radc"/>
    <property type="match status" value="1"/>
</dbReference>
<dbReference type="PANTHER" id="PTHR30471">
    <property type="entry name" value="DNA REPAIR PROTEIN RADC"/>
    <property type="match status" value="1"/>
</dbReference>
<dbReference type="PANTHER" id="PTHR30471:SF3">
    <property type="entry name" value="UPF0758 PROTEIN YEES-RELATED"/>
    <property type="match status" value="1"/>
</dbReference>
<dbReference type="Pfam" id="PF04002">
    <property type="entry name" value="RadC"/>
    <property type="match status" value="1"/>
</dbReference>
<dbReference type="Pfam" id="PF20582">
    <property type="entry name" value="UPF0758_N"/>
    <property type="match status" value="1"/>
</dbReference>
<dbReference type="SUPFAM" id="SSF47781">
    <property type="entry name" value="RuvA domain 2-like"/>
    <property type="match status" value="1"/>
</dbReference>
<dbReference type="PROSITE" id="PS50249">
    <property type="entry name" value="MPN"/>
    <property type="match status" value="1"/>
</dbReference>
<dbReference type="PROSITE" id="PS01302">
    <property type="entry name" value="UPF0758"/>
    <property type="match status" value="1"/>
</dbReference>
<feature type="chain" id="PRO_1000116356" description="UPF0758 protein YicR">
    <location>
        <begin position="1"/>
        <end position="222"/>
    </location>
</feature>
<feature type="domain" description="MPN" evidence="2">
    <location>
        <begin position="100"/>
        <end position="222"/>
    </location>
</feature>
<feature type="short sequence motif" description="JAMM motif" evidence="2">
    <location>
        <begin position="171"/>
        <end position="184"/>
    </location>
</feature>
<feature type="binding site" evidence="2">
    <location>
        <position position="171"/>
    </location>
    <ligand>
        <name>Zn(2+)</name>
        <dbReference type="ChEBI" id="CHEBI:29105"/>
        <note>catalytic</note>
    </ligand>
</feature>
<feature type="binding site" evidence="2">
    <location>
        <position position="173"/>
    </location>
    <ligand>
        <name>Zn(2+)</name>
        <dbReference type="ChEBI" id="CHEBI:29105"/>
        <note>catalytic</note>
    </ligand>
</feature>
<feature type="binding site" evidence="2">
    <location>
        <position position="184"/>
    </location>
    <ligand>
        <name>Zn(2+)</name>
        <dbReference type="ChEBI" id="CHEBI:29105"/>
        <note>catalytic</note>
    </ligand>
</feature>
<protein>
    <recommendedName>
        <fullName evidence="1">UPF0758 protein YicR</fullName>
    </recommendedName>
</protein>
<proteinExistence type="inferred from homology"/>
<evidence type="ECO:0000255" key="1">
    <source>
        <dbReference type="HAMAP-Rule" id="MF_00018"/>
    </source>
</evidence>
<evidence type="ECO:0000255" key="2">
    <source>
        <dbReference type="PROSITE-ProRule" id="PRU01182"/>
    </source>
</evidence>
<sequence length="222" mass="25258">MKNNAQLLMPREKMLKFGISALTDVELLALFLRTGTRGKDVLTLAKEMLENFGSLYGLLTSEYEQFSGVHGIGVAKFAQLKGIAELARRYYNVRMREESPLLSPEMTREFLQSQLTGEEREIFMVIFLDSQHRVITHSRLFSGTLNHVEVHPREIIREAIKINASALILAHNHPSGCAEPSKADKLITERIIKSCQFMDLRVLDHIVIGRGEYVSFAERGWI</sequence>
<gene>
    <name evidence="1" type="primary">yicR</name>
    <name type="ordered locus">ECIAI1_3809</name>
</gene>
<keyword id="KW-0378">Hydrolase</keyword>
<keyword id="KW-0479">Metal-binding</keyword>
<keyword id="KW-0482">Metalloprotease</keyword>
<keyword id="KW-0645">Protease</keyword>
<keyword id="KW-0862">Zinc</keyword>
<organism>
    <name type="scientific">Escherichia coli O8 (strain IAI1)</name>
    <dbReference type="NCBI Taxonomy" id="585034"/>
    <lineage>
        <taxon>Bacteria</taxon>
        <taxon>Pseudomonadati</taxon>
        <taxon>Pseudomonadota</taxon>
        <taxon>Gammaproteobacteria</taxon>
        <taxon>Enterobacterales</taxon>
        <taxon>Enterobacteriaceae</taxon>
        <taxon>Escherichia</taxon>
    </lineage>
</organism>
<name>YICR_ECO8A</name>
<comment type="similarity">
    <text evidence="1">Belongs to the UPF0758 family. YicR subfamily.</text>
</comment>